<name>RS4_BUCA5</name>
<sequence length="206" mass="23847">MAKYLGPKLKLSRREGTDLFLKSGLRSIESKCKLEQPPGQHGIRKPRLSDYAIQLREKQKVRRLYGVLERQFKIYYKLAASLKGNTGANLLQLLESRLDNVVYRMGFGCTRSESRQLINHKSIMVNNKVVNIASYQVSPNDQISIRNKSKNQSRIKAALELVEQREKPIWLEVNSTKMEGIFKRFPERSDLSAEINEYLIVELYSK</sequence>
<protein>
    <recommendedName>
        <fullName evidence="1">Small ribosomal subunit protein uS4</fullName>
    </recommendedName>
    <alternativeName>
        <fullName evidence="2">30S ribosomal protein S4</fullName>
    </alternativeName>
</protein>
<proteinExistence type="inferred from homology"/>
<dbReference type="EMBL" id="CP001161">
    <property type="protein sequence ID" value="ACL30844.1"/>
    <property type="molecule type" value="Genomic_DNA"/>
</dbReference>
<dbReference type="RefSeq" id="WP_009874451.1">
    <property type="nucleotide sequence ID" value="NC_011833.1"/>
</dbReference>
<dbReference type="SMR" id="B8D9S3"/>
<dbReference type="KEGG" id="bap:BUAP5A_493"/>
<dbReference type="HOGENOM" id="CLU_092403_0_2_6"/>
<dbReference type="OrthoDB" id="9803672at2"/>
<dbReference type="Proteomes" id="UP000006904">
    <property type="component" value="Chromosome"/>
</dbReference>
<dbReference type="GO" id="GO:0015935">
    <property type="term" value="C:small ribosomal subunit"/>
    <property type="evidence" value="ECO:0007669"/>
    <property type="project" value="InterPro"/>
</dbReference>
<dbReference type="GO" id="GO:0019843">
    <property type="term" value="F:rRNA binding"/>
    <property type="evidence" value="ECO:0007669"/>
    <property type="project" value="UniProtKB-UniRule"/>
</dbReference>
<dbReference type="GO" id="GO:0003735">
    <property type="term" value="F:structural constituent of ribosome"/>
    <property type="evidence" value="ECO:0007669"/>
    <property type="project" value="InterPro"/>
</dbReference>
<dbReference type="GO" id="GO:0042274">
    <property type="term" value="P:ribosomal small subunit biogenesis"/>
    <property type="evidence" value="ECO:0007669"/>
    <property type="project" value="TreeGrafter"/>
</dbReference>
<dbReference type="GO" id="GO:0006412">
    <property type="term" value="P:translation"/>
    <property type="evidence" value="ECO:0007669"/>
    <property type="project" value="UniProtKB-UniRule"/>
</dbReference>
<dbReference type="CDD" id="cd00165">
    <property type="entry name" value="S4"/>
    <property type="match status" value="1"/>
</dbReference>
<dbReference type="FunFam" id="1.10.1050.10:FF:000001">
    <property type="entry name" value="30S ribosomal protein S4"/>
    <property type="match status" value="1"/>
</dbReference>
<dbReference type="FunFam" id="3.10.290.10:FF:000001">
    <property type="entry name" value="30S ribosomal protein S4"/>
    <property type="match status" value="1"/>
</dbReference>
<dbReference type="Gene3D" id="1.10.1050.10">
    <property type="entry name" value="Ribosomal Protein S4 Delta 41, Chain A, domain 1"/>
    <property type="match status" value="1"/>
</dbReference>
<dbReference type="Gene3D" id="3.10.290.10">
    <property type="entry name" value="RNA-binding S4 domain"/>
    <property type="match status" value="1"/>
</dbReference>
<dbReference type="HAMAP" id="MF_01306_B">
    <property type="entry name" value="Ribosomal_uS4_B"/>
    <property type="match status" value="1"/>
</dbReference>
<dbReference type="InterPro" id="IPR022801">
    <property type="entry name" value="Ribosomal_uS4"/>
</dbReference>
<dbReference type="InterPro" id="IPR005709">
    <property type="entry name" value="Ribosomal_uS4_bac-type"/>
</dbReference>
<dbReference type="InterPro" id="IPR018079">
    <property type="entry name" value="Ribosomal_uS4_CS"/>
</dbReference>
<dbReference type="InterPro" id="IPR001912">
    <property type="entry name" value="Ribosomal_uS4_N"/>
</dbReference>
<dbReference type="InterPro" id="IPR002942">
    <property type="entry name" value="S4_RNA-bd"/>
</dbReference>
<dbReference type="InterPro" id="IPR036986">
    <property type="entry name" value="S4_RNA-bd_sf"/>
</dbReference>
<dbReference type="NCBIfam" id="NF003717">
    <property type="entry name" value="PRK05327.1"/>
    <property type="match status" value="1"/>
</dbReference>
<dbReference type="NCBIfam" id="TIGR01017">
    <property type="entry name" value="rpsD_bact"/>
    <property type="match status" value="1"/>
</dbReference>
<dbReference type="PANTHER" id="PTHR11831">
    <property type="entry name" value="30S 40S RIBOSOMAL PROTEIN"/>
    <property type="match status" value="1"/>
</dbReference>
<dbReference type="PANTHER" id="PTHR11831:SF4">
    <property type="entry name" value="SMALL RIBOSOMAL SUBUNIT PROTEIN US4M"/>
    <property type="match status" value="1"/>
</dbReference>
<dbReference type="Pfam" id="PF00163">
    <property type="entry name" value="Ribosomal_S4"/>
    <property type="match status" value="1"/>
</dbReference>
<dbReference type="Pfam" id="PF01479">
    <property type="entry name" value="S4"/>
    <property type="match status" value="1"/>
</dbReference>
<dbReference type="SMART" id="SM01390">
    <property type="entry name" value="Ribosomal_S4"/>
    <property type="match status" value="1"/>
</dbReference>
<dbReference type="SMART" id="SM00363">
    <property type="entry name" value="S4"/>
    <property type="match status" value="1"/>
</dbReference>
<dbReference type="SUPFAM" id="SSF55174">
    <property type="entry name" value="Alpha-L RNA-binding motif"/>
    <property type="match status" value="1"/>
</dbReference>
<dbReference type="PROSITE" id="PS00632">
    <property type="entry name" value="RIBOSOMAL_S4"/>
    <property type="match status" value="1"/>
</dbReference>
<dbReference type="PROSITE" id="PS50889">
    <property type="entry name" value="S4"/>
    <property type="match status" value="1"/>
</dbReference>
<reference key="1">
    <citation type="journal article" date="2009" name="Science">
        <title>The dynamics and time scale of ongoing genomic erosion in symbiotic bacteria.</title>
        <authorList>
            <person name="Moran N.A."/>
            <person name="McLaughlin H.J."/>
            <person name="Sorek R."/>
        </authorList>
    </citation>
    <scope>NUCLEOTIDE SEQUENCE [LARGE SCALE GENOMIC DNA]</scope>
    <source>
        <strain>5A</strain>
    </source>
</reference>
<gene>
    <name evidence="1" type="primary">rpsD</name>
    <name type="ordered locus">BUAP5A_493</name>
</gene>
<organism>
    <name type="scientific">Buchnera aphidicola subsp. Acyrthosiphon pisum (strain 5A)</name>
    <dbReference type="NCBI Taxonomy" id="563178"/>
    <lineage>
        <taxon>Bacteria</taxon>
        <taxon>Pseudomonadati</taxon>
        <taxon>Pseudomonadota</taxon>
        <taxon>Gammaproteobacteria</taxon>
        <taxon>Enterobacterales</taxon>
        <taxon>Erwiniaceae</taxon>
        <taxon>Buchnera</taxon>
    </lineage>
</organism>
<keyword id="KW-0687">Ribonucleoprotein</keyword>
<keyword id="KW-0689">Ribosomal protein</keyword>
<keyword id="KW-0694">RNA-binding</keyword>
<keyword id="KW-0699">rRNA-binding</keyword>
<comment type="function">
    <text evidence="1">One of the primary rRNA binding proteins, it binds directly to 16S rRNA where it nucleates assembly of the body of the 30S subunit.</text>
</comment>
<comment type="function">
    <text evidence="1">With S5 and S12 plays an important role in translational accuracy.</text>
</comment>
<comment type="subunit">
    <text evidence="1">Part of the 30S ribosomal subunit. Contacts protein S5. The interaction surface between S4 and S5 is involved in control of translational fidelity.</text>
</comment>
<comment type="similarity">
    <text evidence="1">Belongs to the universal ribosomal protein uS4 family.</text>
</comment>
<evidence type="ECO:0000255" key="1">
    <source>
        <dbReference type="HAMAP-Rule" id="MF_01306"/>
    </source>
</evidence>
<evidence type="ECO:0000305" key="2"/>
<feature type="chain" id="PRO_1000165388" description="Small ribosomal subunit protein uS4">
    <location>
        <begin position="1"/>
        <end position="206"/>
    </location>
</feature>
<feature type="domain" description="S4 RNA-binding" evidence="1">
    <location>
        <begin position="96"/>
        <end position="156"/>
    </location>
</feature>
<accession>B8D9S3</accession>